<comment type="function">
    <text evidence="1">Involved in the gluconeogenesis. Catalyzes stereospecifically the conversion of dihydroxyacetone phosphate (DHAP) to D-glyceraldehyde-3-phosphate (G3P).</text>
</comment>
<comment type="catalytic activity">
    <reaction evidence="1">
        <text>D-glyceraldehyde 3-phosphate = dihydroxyacetone phosphate</text>
        <dbReference type="Rhea" id="RHEA:18585"/>
        <dbReference type="ChEBI" id="CHEBI:57642"/>
        <dbReference type="ChEBI" id="CHEBI:59776"/>
        <dbReference type="EC" id="5.3.1.1"/>
    </reaction>
</comment>
<comment type="pathway">
    <text evidence="1">Carbohydrate biosynthesis; gluconeogenesis.</text>
</comment>
<comment type="pathway">
    <text evidence="1">Carbohydrate degradation; glycolysis; D-glyceraldehyde 3-phosphate from glycerone phosphate: step 1/1.</text>
</comment>
<comment type="subunit">
    <text evidence="1">Homodimer.</text>
</comment>
<comment type="subcellular location">
    <subcellularLocation>
        <location evidence="1">Cytoplasm</location>
    </subcellularLocation>
</comment>
<comment type="similarity">
    <text evidence="1">Belongs to the triosephosphate isomerase family.</text>
</comment>
<accession>Q7WCQ5</accession>
<protein>
    <recommendedName>
        <fullName evidence="1">Triosephosphate isomerase</fullName>
        <shortName evidence="1">TIM</shortName>
        <shortName evidence="1">TPI</shortName>
        <ecNumber evidence="1">5.3.1.1</ecNumber>
    </recommendedName>
    <alternativeName>
        <fullName evidence="1">Triose-phosphate isomerase</fullName>
    </alternativeName>
</protein>
<feature type="chain" id="PRO_0000090183" description="Triosephosphate isomerase">
    <location>
        <begin position="1"/>
        <end position="248"/>
    </location>
</feature>
<feature type="active site" description="Electrophile" evidence="1">
    <location>
        <position position="99"/>
    </location>
</feature>
<feature type="active site" description="Proton acceptor" evidence="1">
    <location>
        <position position="170"/>
    </location>
</feature>
<feature type="binding site" evidence="1">
    <location>
        <begin position="14"/>
        <end position="16"/>
    </location>
    <ligand>
        <name>substrate</name>
    </ligand>
</feature>
<feature type="binding site" evidence="1">
    <location>
        <position position="176"/>
    </location>
    <ligand>
        <name>substrate</name>
    </ligand>
</feature>
<feature type="binding site" evidence="1">
    <location>
        <position position="212"/>
    </location>
    <ligand>
        <name>substrate</name>
    </ligand>
</feature>
<feature type="binding site" evidence="1">
    <location>
        <begin position="233"/>
        <end position="234"/>
    </location>
    <ligand>
        <name>substrate</name>
    </ligand>
</feature>
<name>TPIS_BORBR</name>
<reference key="1">
    <citation type="journal article" date="2003" name="Nat. Genet.">
        <title>Comparative analysis of the genome sequences of Bordetella pertussis, Bordetella parapertussis and Bordetella bronchiseptica.</title>
        <authorList>
            <person name="Parkhill J."/>
            <person name="Sebaihia M."/>
            <person name="Preston A."/>
            <person name="Murphy L.D."/>
            <person name="Thomson N.R."/>
            <person name="Harris D.E."/>
            <person name="Holden M.T.G."/>
            <person name="Churcher C.M."/>
            <person name="Bentley S.D."/>
            <person name="Mungall K.L."/>
            <person name="Cerdeno-Tarraga A.-M."/>
            <person name="Temple L."/>
            <person name="James K.D."/>
            <person name="Harris B."/>
            <person name="Quail M.A."/>
            <person name="Achtman M."/>
            <person name="Atkin R."/>
            <person name="Baker S."/>
            <person name="Basham D."/>
            <person name="Bason N."/>
            <person name="Cherevach I."/>
            <person name="Chillingworth T."/>
            <person name="Collins M."/>
            <person name="Cronin A."/>
            <person name="Davis P."/>
            <person name="Doggett J."/>
            <person name="Feltwell T."/>
            <person name="Goble A."/>
            <person name="Hamlin N."/>
            <person name="Hauser H."/>
            <person name="Holroyd S."/>
            <person name="Jagels K."/>
            <person name="Leather S."/>
            <person name="Moule S."/>
            <person name="Norberczak H."/>
            <person name="O'Neil S."/>
            <person name="Ormond D."/>
            <person name="Price C."/>
            <person name="Rabbinowitsch E."/>
            <person name="Rutter S."/>
            <person name="Sanders M."/>
            <person name="Saunders D."/>
            <person name="Seeger K."/>
            <person name="Sharp S."/>
            <person name="Simmonds M."/>
            <person name="Skelton J."/>
            <person name="Squares R."/>
            <person name="Squares S."/>
            <person name="Stevens K."/>
            <person name="Unwin L."/>
            <person name="Whitehead S."/>
            <person name="Barrell B.G."/>
            <person name="Maskell D.J."/>
        </authorList>
    </citation>
    <scope>NUCLEOTIDE SEQUENCE [LARGE SCALE GENOMIC DNA]</scope>
    <source>
        <strain>ATCC BAA-588 / NCTC 13252 / RB50</strain>
    </source>
</reference>
<proteinExistence type="inferred from homology"/>
<gene>
    <name evidence="1" type="primary">tpiA</name>
    <name type="synonym">tpi</name>
    <name type="ordered locus">BB3876</name>
</gene>
<dbReference type="EC" id="5.3.1.1" evidence="1"/>
<dbReference type="EMBL" id="BX640448">
    <property type="protein sequence ID" value="CAE35850.1"/>
    <property type="molecule type" value="Genomic_DNA"/>
</dbReference>
<dbReference type="RefSeq" id="WP_003813996.1">
    <property type="nucleotide sequence ID" value="NC_002927.3"/>
</dbReference>
<dbReference type="SMR" id="Q7WCQ5"/>
<dbReference type="GeneID" id="93205210"/>
<dbReference type="KEGG" id="bbr:BB3876"/>
<dbReference type="eggNOG" id="COG0149">
    <property type="taxonomic scope" value="Bacteria"/>
</dbReference>
<dbReference type="HOGENOM" id="CLU_024251_2_1_4"/>
<dbReference type="UniPathway" id="UPA00109">
    <property type="reaction ID" value="UER00189"/>
</dbReference>
<dbReference type="UniPathway" id="UPA00138"/>
<dbReference type="Proteomes" id="UP000001027">
    <property type="component" value="Chromosome"/>
</dbReference>
<dbReference type="GO" id="GO:0005829">
    <property type="term" value="C:cytosol"/>
    <property type="evidence" value="ECO:0007669"/>
    <property type="project" value="TreeGrafter"/>
</dbReference>
<dbReference type="GO" id="GO:0004807">
    <property type="term" value="F:triose-phosphate isomerase activity"/>
    <property type="evidence" value="ECO:0007669"/>
    <property type="project" value="UniProtKB-UniRule"/>
</dbReference>
<dbReference type="GO" id="GO:0006094">
    <property type="term" value="P:gluconeogenesis"/>
    <property type="evidence" value="ECO:0007669"/>
    <property type="project" value="UniProtKB-UniRule"/>
</dbReference>
<dbReference type="GO" id="GO:0046166">
    <property type="term" value="P:glyceraldehyde-3-phosphate biosynthetic process"/>
    <property type="evidence" value="ECO:0007669"/>
    <property type="project" value="TreeGrafter"/>
</dbReference>
<dbReference type="GO" id="GO:0019563">
    <property type="term" value="P:glycerol catabolic process"/>
    <property type="evidence" value="ECO:0007669"/>
    <property type="project" value="TreeGrafter"/>
</dbReference>
<dbReference type="GO" id="GO:0006096">
    <property type="term" value="P:glycolytic process"/>
    <property type="evidence" value="ECO:0007669"/>
    <property type="project" value="UniProtKB-UniRule"/>
</dbReference>
<dbReference type="CDD" id="cd00311">
    <property type="entry name" value="TIM"/>
    <property type="match status" value="1"/>
</dbReference>
<dbReference type="FunFam" id="3.20.20.70:FF:000016">
    <property type="entry name" value="Triosephosphate isomerase"/>
    <property type="match status" value="1"/>
</dbReference>
<dbReference type="Gene3D" id="3.20.20.70">
    <property type="entry name" value="Aldolase class I"/>
    <property type="match status" value="1"/>
</dbReference>
<dbReference type="HAMAP" id="MF_00147_B">
    <property type="entry name" value="TIM_B"/>
    <property type="match status" value="1"/>
</dbReference>
<dbReference type="InterPro" id="IPR013785">
    <property type="entry name" value="Aldolase_TIM"/>
</dbReference>
<dbReference type="InterPro" id="IPR035990">
    <property type="entry name" value="TIM_sf"/>
</dbReference>
<dbReference type="InterPro" id="IPR022896">
    <property type="entry name" value="TrioseP_Isoase_bac/euk"/>
</dbReference>
<dbReference type="InterPro" id="IPR000652">
    <property type="entry name" value="Triosephosphate_isomerase"/>
</dbReference>
<dbReference type="InterPro" id="IPR020861">
    <property type="entry name" value="Triosephosphate_isomerase_AS"/>
</dbReference>
<dbReference type="NCBIfam" id="TIGR00419">
    <property type="entry name" value="tim"/>
    <property type="match status" value="1"/>
</dbReference>
<dbReference type="PANTHER" id="PTHR21139">
    <property type="entry name" value="TRIOSEPHOSPHATE ISOMERASE"/>
    <property type="match status" value="1"/>
</dbReference>
<dbReference type="PANTHER" id="PTHR21139:SF42">
    <property type="entry name" value="TRIOSEPHOSPHATE ISOMERASE"/>
    <property type="match status" value="1"/>
</dbReference>
<dbReference type="Pfam" id="PF00121">
    <property type="entry name" value="TIM"/>
    <property type="match status" value="1"/>
</dbReference>
<dbReference type="SUPFAM" id="SSF51351">
    <property type="entry name" value="Triosephosphate isomerase (TIM)"/>
    <property type="match status" value="1"/>
</dbReference>
<dbReference type="PROSITE" id="PS00171">
    <property type="entry name" value="TIM_1"/>
    <property type="match status" value="1"/>
</dbReference>
<dbReference type="PROSITE" id="PS51440">
    <property type="entry name" value="TIM_2"/>
    <property type="match status" value="1"/>
</dbReference>
<keyword id="KW-0963">Cytoplasm</keyword>
<keyword id="KW-0312">Gluconeogenesis</keyword>
<keyword id="KW-0324">Glycolysis</keyword>
<keyword id="KW-0413">Isomerase</keyword>
<evidence type="ECO:0000255" key="1">
    <source>
        <dbReference type="HAMAP-Rule" id="MF_00147"/>
    </source>
</evidence>
<organism>
    <name type="scientific">Bordetella bronchiseptica (strain ATCC BAA-588 / NCTC 13252 / RB50)</name>
    <name type="common">Alcaligenes bronchisepticus</name>
    <dbReference type="NCBI Taxonomy" id="257310"/>
    <lineage>
        <taxon>Bacteria</taxon>
        <taxon>Pseudomonadati</taxon>
        <taxon>Pseudomonadota</taxon>
        <taxon>Betaproteobacteria</taxon>
        <taxon>Burkholderiales</taxon>
        <taxon>Alcaligenaceae</taxon>
        <taxon>Bordetella</taxon>
    </lineage>
</organism>
<sequence>MTTAENRARLVLGNWKMHGNLAENAALLAELRAADAAAHCEMGVCVPFPYLAQTAAALQGSAIGWGAQDVSAHAKGAYTGEVAAPMLAEFGCRWVLVGHSERRTLHAESDQLVADKARAALEAGLTPVVCVGESLQEREGGNTLGVIERQLEPVLALGRDALVRMVLAYEPVWAIGTGRTASPEQAQEVHSAIRVALDGLQASQVRVLYGGSVKGANAASLFAMPDIDGGLVGGASLVAEEFLRIAAA</sequence>